<comment type="function">
    <text>May be involved in transcriptional regulation.</text>
</comment>
<comment type="interaction">
    <interactant intactId="EBI-5292994">
        <id>Q8NBB4</id>
    </interactant>
    <interactant intactId="EBI-349832">
        <id>Q9HD26</id>
        <label>GOPC</label>
    </interactant>
    <organismsDiffer>false</organismsDiffer>
    <experiments>3</experiments>
</comment>
<comment type="interaction">
    <interactant intactId="EBI-5292994">
        <id>Q8NBB4</id>
    </interactant>
    <interactant intactId="EBI-368321">
        <id>O60437</id>
        <label>PPL</label>
    </interactant>
    <organismsDiffer>false</organismsDiffer>
    <experiments>3</experiments>
</comment>
<comment type="interaction">
    <interactant intactId="EBI-12021938">
        <id>Q8NBB4-2</id>
    </interactant>
    <interactant intactId="EBI-930964">
        <id>P54253</id>
        <label>ATXN1</label>
    </interactant>
    <organismsDiffer>false</organismsDiffer>
    <experiments>6</experiments>
</comment>
<comment type="interaction">
    <interactant intactId="EBI-12021938">
        <id>Q8NBB4-2</id>
    </interactant>
    <interactant intactId="EBI-1053164">
        <id>O75190</id>
        <label>DNAJB6</label>
    </interactant>
    <organismsDiffer>false</organismsDiffer>
    <experiments>3</experiments>
</comment>
<comment type="interaction">
    <interactant intactId="EBI-12021938">
        <id>Q8NBB4-2</id>
    </interactant>
    <interactant intactId="EBI-750300">
        <id>Q01658</id>
        <label>DR1</label>
    </interactant>
    <organismsDiffer>false</organismsDiffer>
    <experiments>3</experiments>
</comment>
<comment type="interaction">
    <interactant intactId="EBI-12021938">
        <id>Q8NBB4-2</id>
    </interactant>
    <interactant intactId="EBI-389564">
        <id>Q00403</id>
        <label>GTF2B</label>
    </interactant>
    <organismsDiffer>false</organismsDiffer>
    <experiments>3</experiments>
</comment>
<comment type="interaction">
    <interactant intactId="EBI-12021938">
        <id>Q8NBB4-2</id>
    </interactant>
    <interactant intactId="EBI-1054873">
        <id>Q9Y5Q9</id>
        <label>GTF3C3</label>
    </interactant>
    <organismsDiffer>false</organismsDiffer>
    <experiments>3</experiments>
</comment>
<comment type="interaction">
    <interactant intactId="EBI-12021938">
        <id>Q8NBB4-2</id>
    </interactant>
    <interactant intactId="EBI-948266">
        <id>O14901</id>
        <label>KLF11</label>
    </interactant>
    <organismsDiffer>false</organismsDiffer>
    <experiments>3</experiments>
</comment>
<comment type="interaction">
    <interactant intactId="EBI-12021938">
        <id>Q8NBB4-2</id>
    </interactant>
    <interactant intactId="EBI-11956831">
        <id>Q13952-2</id>
        <label>NFYC</label>
    </interactant>
    <organismsDiffer>false</organismsDiffer>
    <experiments>3</experiments>
</comment>
<comment type="interaction">
    <interactant intactId="EBI-12021938">
        <id>Q8NBB4-2</id>
    </interactant>
    <interactant intactId="EBI-368321">
        <id>O60437</id>
        <label>PPL</label>
    </interactant>
    <organismsDiffer>false</organismsDiffer>
    <experiments>3</experiments>
</comment>
<comment type="interaction">
    <interactant intactId="EBI-12021938">
        <id>Q8NBB4-2</id>
    </interactant>
    <interactant intactId="EBI-2010251">
        <id>P49810</id>
        <label>PSEN2</label>
    </interactant>
    <organismsDiffer>false</organismsDiffer>
    <experiments>3</experiments>
</comment>
<comment type="interaction">
    <interactant intactId="EBI-12021938">
        <id>Q8NBB4-2</id>
    </interactant>
    <interactant intactId="EBI-985879">
        <id>P37840</id>
        <label>SNCA</label>
    </interactant>
    <organismsDiffer>false</organismsDiffer>
    <experiments>3</experiments>
</comment>
<comment type="interaction">
    <interactant intactId="EBI-12021938">
        <id>Q8NBB4-2</id>
    </interactant>
    <interactant intactId="EBI-990792">
        <id>P00441</id>
        <label>SOD1</label>
    </interactant>
    <organismsDiffer>false</organismsDiffer>
    <experiments>3</experiments>
</comment>
<comment type="interaction">
    <interactant intactId="EBI-12021938">
        <id>Q8NBB4-2</id>
    </interactant>
    <interactant intactId="EBI-372899">
        <id>Q13148</id>
        <label>TARDBP</label>
    </interactant>
    <organismsDiffer>false</organismsDiffer>
    <experiments>6</experiments>
</comment>
<comment type="interaction">
    <interactant intactId="EBI-12021938">
        <id>Q8NBB4-2</id>
    </interactant>
    <interactant intactId="EBI-10178224">
        <id>P10073</id>
        <label>ZSCAN22</label>
    </interactant>
    <organismsDiffer>false</organismsDiffer>
    <experiments>3</experiments>
</comment>
<comment type="subcellular location">
    <subcellularLocation>
        <location evidence="2">Nucleus</location>
    </subcellularLocation>
</comment>
<comment type="alternative products">
    <event type="alternative splicing"/>
    <isoform>
        <id>Q8NBB4-1</id>
        <name>1</name>
        <sequence type="displayed"/>
    </isoform>
    <isoform>
        <id>Q8NBB4-2</id>
        <name>2</name>
        <sequence type="described" ref="VSP_011953 VSP_011954"/>
    </isoform>
</comment>
<dbReference type="EMBL" id="AY280370">
    <property type="protein sequence ID" value="AAQ16582.1"/>
    <property type="molecule type" value="mRNA"/>
</dbReference>
<dbReference type="EMBL" id="AK091098">
    <property type="protein sequence ID" value="BAC03582.1"/>
    <property type="molecule type" value="mRNA"/>
</dbReference>
<dbReference type="EMBL" id="AC008751">
    <property type="status" value="NOT_ANNOTATED_CDS"/>
    <property type="molecule type" value="Genomic_DNA"/>
</dbReference>
<dbReference type="EMBL" id="AC008969">
    <property type="status" value="NOT_ANNOTATED_CDS"/>
    <property type="molecule type" value="Genomic_DNA"/>
</dbReference>
<dbReference type="EMBL" id="CH471135">
    <property type="protein sequence ID" value="EAW72550.1"/>
    <property type="molecule type" value="Genomic_DNA"/>
</dbReference>
<dbReference type="EMBL" id="BC048099">
    <property type="protein sequence ID" value="AAH48099.1"/>
    <property type="molecule type" value="mRNA"/>
</dbReference>
<dbReference type="EMBL" id="BC107729">
    <property type="protein sequence ID" value="AAI07730.1"/>
    <property type="molecule type" value="mRNA"/>
</dbReference>
<dbReference type="CCDS" id="CCDS12969.1">
    <molecule id="Q8NBB4-1"/>
</dbReference>
<dbReference type="RefSeq" id="NP_872378.3">
    <molecule id="Q8NBB4-1"/>
    <property type="nucleotide sequence ID" value="NM_182572.3"/>
</dbReference>
<dbReference type="SMR" id="Q8NBB4"/>
<dbReference type="BioGRID" id="129825">
    <property type="interactions" value="55"/>
</dbReference>
<dbReference type="FunCoup" id="Q8NBB4">
    <property type="interactions" value="19"/>
</dbReference>
<dbReference type="IntAct" id="Q8NBB4">
    <property type="interactions" value="62"/>
</dbReference>
<dbReference type="STRING" id="9606.ENSP00000282326"/>
<dbReference type="GlyGen" id="Q8NBB4">
    <property type="glycosylation" value="2 sites, 1 O-linked glycan (1 site)"/>
</dbReference>
<dbReference type="iPTMnet" id="Q8NBB4"/>
<dbReference type="PhosphoSitePlus" id="Q8NBB4"/>
<dbReference type="BioMuta" id="ZSCAN1"/>
<dbReference type="DMDM" id="296453061"/>
<dbReference type="jPOST" id="Q8NBB4"/>
<dbReference type="MassIVE" id="Q8NBB4"/>
<dbReference type="PaxDb" id="9606-ENSP00000282326"/>
<dbReference type="PeptideAtlas" id="Q8NBB4"/>
<dbReference type="ABCD" id="Q8NBB4">
    <property type="antibodies" value="4 sequenced antibodies"/>
</dbReference>
<dbReference type="Antibodypedia" id="1802">
    <property type="antibodies" value="109 antibodies from 20 providers"/>
</dbReference>
<dbReference type="DNASU" id="284312"/>
<dbReference type="Ensembl" id="ENST00000282326.6">
    <molecule id="Q8NBB4-1"/>
    <property type="protein sequence ID" value="ENSP00000282326.1"/>
    <property type="gene ID" value="ENSG00000152467.10"/>
</dbReference>
<dbReference type="GeneID" id="284312"/>
<dbReference type="KEGG" id="hsa:284312"/>
<dbReference type="MANE-Select" id="ENST00000282326.6">
    <property type="protein sequence ID" value="ENSP00000282326.1"/>
    <property type="RefSeq nucleotide sequence ID" value="NM_182572.4"/>
    <property type="RefSeq protein sequence ID" value="NP_872378.3"/>
</dbReference>
<dbReference type="UCSC" id="uc002qra.2">
    <molecule id="Q8NBB4-1"/>
    <property type="organism name" value="human"/>
</dbReference>
<dbReference type="AGR" id="HGNC:23712"/>
<dbReference type="CTD" id="284312"/>
<dbReference type="DisGeNET" id="284312"/>
<dbReference type="GeneCards" id="ZSCAN1"/>
<dbReference type="HGNC" id="HGNC:23712">
    <property type="gene designation" value="ZSCAN1"/>
</dbReference>
<dbReference type="HPA" id="ENSG00000152467">
    <property type="expression patterns" value="Tissue enhanced (brain, pituitary gland, testis)"/>
</dbReference>
<dbReference type="MIM" id="620026">
    <property type="type" value="gene"/>
</dbReference>
<dbReference type="neXtProt" id="NX_Q8NBB4"/>
<dbReference type="PharmGKB" id="PA143485394"/>
<dbReference type="VEuPathDB" id="HostDB:ENSG00000152467"/>
<dbReference type="eggNOG" id="KOG1721">
    <property type="taxonomic scope" value="Eukaryota"/>
</dbReference>
<dbReference type="GeneTree" id="ENSGT00940000164008"/>
<dbReference type="HOGENOM" id="CLU_002678_49_8_1"/>
<dbReference type="InParanoid" id="Q8NBB4"/>
<dbReference type="OMA" id="HTVHGHM"/>
<dbReference type="OrthoDB" id="9427073at2759"/>
<dbReference type="PAN-GO" id="Q8NBB4">
    <property type="GO annotations" value="3 GO annotations based on evolutionary models"/>
</dbReference>
<dbReference type="PhylomeDB" id="Q8NBB4"/>
<dbReference type="TreeFam" id="TF336839"/>
<dbReference type="PathwayCommons" id="Q8NBB4"/>
<dbReference type="SignaLink" id="Q8NBB4"/>
<dbReference type="BioGRID-ORCS" id="284312">
    <property type="hits" value="11 hits in 1171 CRISPR screens"/>
</dbReference>
<dbReference type="GenomeRNAi" id="284312"/>
<dbReference type="Pharos" id="Q8NBB4">
    <property type="development level" value="Tbio"/>
</dbReference>
<dbReference type="PRO" id="PR:Q8NBB4"/>
<dbReference type="Proteomes" id="UP000005640">
    <property type="component" value="Chromosome 19"/>
</dbReference>
<dbReference type="RNAct" id="Q8NBB4">
    <property type="molecule type" value="protein"/>
</dbReference>
<dbReference type="Bgee" id="ENSG00000152467">
    <property type="expression patterns" value="Expressed in adenohypophysis and 90 other cell types or tissues"/>
</dbReference>
<dbReference type="ExpressionAtlas" id="Q8NBB4">
    <property type="expression patterns" value="baseline and differential"/>
</dbReference>
<dbReference type="GO" id="GO:0000785">
    <property type="term" value="C:chromatin"/>
    <property type="evidence" value="ECO:0000247"/>
    <property type="project" value="NTNU_SB"/>
</dbReference>
<dbReference type="GO" id="GO:0005634">
    <property type="term" value="C:nucleus"/>
    <property type="evidence" value="ECO:0007669"/>
    <property type="project" value="UniProtKB-SubCell"/>
</dbReference>
<dbReference type="GO" id="GO:0000981">
    <property type="term" value="F:DNA-binding transcription factor activity, RNA polymerase II-specific"/>
    <property type="evidence" value="ECO:0000247"/>
    <property type="project" value="NTNU_SB"/>
</dbReference>
<dbReference type="GO" id="GO:0000978">
    <property type="term" value="F:RNA polymerase II cis-regulatory region sequence-specific DNA binding"/>
    <property type="evidence" value="ECO:0000318"/>
    <property type="project" value="GO_Central"/>
</dbReference>
<dbReference type="GO" id="GO:1990837">
    <property type="term" value="F:sequence-specific double-stranded DNA binding"/>
    <property type="evidence" value="ECO:0000314"/>
    <property type="project" value="ARUK-UCL"/>
</dbReference>
<dbReference type="GO" id="GO:0008270">
    <property type="term" value="F:zinc ion binding"/>
    <property type="evidence" value="ECO:0007669"/>
    <property type="project" value="UniProtKB-KW"/>
</dbReference>
<dbReference type="GO" id="GO:0006357">
    <property type="term" value="P:regulation of transcription by RNA polymerase II"/>
    <property type="evidence" value="ECO:0000318"/>
    <property type="project" value="GO_Central"/>
</dbReference>
<dbReference type="CDD" id="cd07936">
    <property type="entry name" value="SCAN"/>
    <property type="match status" value="1"/>
</dbReference>
<dbReference type="FunFam" id="3.30.160.60:FF:001604">
    <property type="entry name" value="Zinc finger and SCAN domain containing 1"/>
    <property type="match status" value="2"/>
</dbReference>
<dbReference type="FunFam" id="3.30.160.60:FF:000446">
    <property type="entry name" value="Zinc finger protein"/>
    <property type="match status" value="1"/>
</dbReference>
<dbReference type="FunFam" id="1.10.4020.10:FF:000001">
    <property type="entry name" value="zinc finger protein 263 isoform X1"/>
    <property type="match status" value="1"/>
</dbReference>
<dbReference type="Gene3D" id="3.30.160.60">
    <property type="entry name" value="Classic Zinc Finger"/>
    <property type="match status" value="3"/>
</dbReference>
<dbReference type="Gene3D" id="1.10.4020.10">
    <property type="entry name" value="DNA breaking-rejoining enzymes"/>
    <property type="match status" value="1"/>
</dbReference>
<dbReference type="InterPro" id="IPR050916">
    <property type="entry name" value="SCAN-C2H2_zinc_finger"/>
</dbReference>
<dbReference type="InterPro" id="IPR003309">
    <property type="entry name" value="SCAN_dom"/>
</dbReference>
<dbReference type="InterPro" id="IPR038269">
    <property type="entry name" value="SCAN_sf"/>
</dbReference>
<dbReference type="InterPro" id="IPR036236">
    <property type="entry name" value="Znf_C2H2_sf"/>
</dbReference>
<dbReference type="InterPro" id="IPR013087">
    <property type="entry name" value="Znf_C2H2_type"/>
</dbReference>
<dbReference type="PANTHER" id="PTHR45935">
    <property type="entry name" value="PROTEIN ZBED8-RELATED"/>
    <property type="match status" value="1"/>
</dbReference>
<dbReference type="PANTHER" id="PTHR45935:SF25">
    <property type="entry name" value="SCAN BOX DOMAIN-CONTAINING PROTEIN"/>
    <property type="match status" value="1"/>
</dbReference>
<dbReference type="Pfam" id="PF02023">
    <property type="entry name" value="SCAN"/>
    <property type="match status" value="1"/>
</dbReference>
<dbReference type="Pfam" id="PF00096">
    <property type="entry name" value="zf-C2H2"/>
    <property type="match status" value="1"/>
</dbReference>
<dbReference type="SMART" id="SM00431">
    <property type="entry name" value="SCAN"/>
    <property type="match status" value="1"/>
</dbReference>
<dbReference type="SMART" id="SM00355">
    <property type="entry name" value="ZnF_C2H2"/>
    <property type="match status" value="3"/>
</dbReference>
<dbReference type="SUPFAM" id="SSF57667">
    <property type="entry name" value="beta-beta-alpha zinc fingers"/>
    <property type="match status" value="2"/>
</dbReference>
<dbReference type="SUPFAM" id="SSF47353">
    <property type="entry name" value="Retrovirus capsid dimerization domain-like"/>
    <property type="match status" value="1"/>
</dbReference>
<dbReference type="PROSITE" id="PS50804">
    <property type="entry name" value="SCAN_BOX"/>
    <property type="match status" value="1"/>
</dbReference>
<dbReference type="PROSITE" id="PS00028">
    <property type="entry name" value="ZINC_FINGER_C2H2_1"/>
    <property type="match status" value="3"/>
</dbReference>
<dbReference type="PROSITE" id="PS50157">
    <property type="entry name" value="ZINC_FINGER_C2H2_2"/>
    <property type="match status" value="3"/>
</dbReference>
<gene>
    <name type="primary">ZSCAN1</name>
</gene>
<sequence>MLPRPKAPASPRRPQTPTPSEQDADPGPASPRDTEAQRLRFRQFQYHVASGPHLALGQLWTLCRQWLRPEARSKEQMLELLVLEQFLGALPSKMRTWVQSQGPRSCREAASLVEDLTQMCQQEVLVSLDSVEPQDWSFGEEEDGKSPRSQKEPSQASELILDAVAAAPALPEESEWLETTQLQQSLHTRAEAEAPRAPGLLGSRARLPLKPSIWDEPEDLLAGPSSDLRAEGTVISSPKGPSAQRISPRRRNRNTDQSGRHQPSLKHTKGGTQEAVAGISVVPRGPRGGRPFQCADCGMVFTWVTHFIEHQKTHREEGPFPCPECGKVFLHNSVLTEHGKIHLLEPPRKKAPRSKGPRESVPPRDGAQGPVAPRSPKRPFQCSVCGKAFPWMVHLIDHQKLHTAHGHM</sequence>
<name>ZSCA1_HUMAN</name>
<protein>
    <recommendedName>
        <fullName>Zinc finger and SCAN domain-containing protein 1</fullName>
    </recommendedName>
</protein>
<proteinExistence type="evidence at protein level"/>
<organism>
    <name type="scientific">Homo sapiens</name>
    <name type="common">Human</name>
    <dbReference type="NCBI Taxonomy" id="9606"/>
    <lineage>
        <taxon>Eukaryota</taxon>
        <taxon>Metazoa</taxon>
        <taxon>Chordata</taxon>
        <taxon>Craniata</taxon>
        <taxon>Vertebrata</taxon>
        <taxon>Euteleostomi</taxon>
        <taxon>Mammalia</taxon>
        <taxon>Eutheria</taxon>
        <taxon>Euarchontoglires</taxon>
        <taxon>Primates</taxon>
        <taxon>Haplorrhini</taxon>
        <taxon>Catarrhini</taxon>
        <taxon>Hominidae</taxon>
        <taxon>Homo</taxon>
    </lineage>
</organism>
<keyword id="KW-0025">Alternative splicing</keyword>
<keyword id="KW-0238">DNA-binding</keyword>
<keyword id="KW-0479">Metal-binding</keyword>
<keyword id="KW-0539">Nucleus</keyword>
<keyword id="KW-1185">Reference proteome</keyword>
<keyword id="KW-0677">Repeat</keyword>
<keyword id="KW-0804">Transcription</keyword>
<keyword id="KW-0805">Transcription regulation</keyword>
<keyword id="KW-0862">Zinc</keyword>
<keyword id="KW-0863">Zinc-finger</keyword>
<evidence type="ECO:0000255" key="1">
    <source>
        <dbReference type="PROSITE-ProRule" id="PRU00042"/>
    </source>
</evidence>
<evidence type="ECO:0000255" key="2">
    <source>
        <dbReference type="PROSITE-ProRule" id="PRU00187"/>
    </source>
</evidence>
<evidence type="ECO:0000256" key="3">
    <source>
        <dbReference type="SAM" id="MobiDB-lite"/>
    </source>
</evidence>
<evidence type="ECO:0000303" key="4">
    <source>
    </source>
</evidence>
<evidence type="ECO:0000303" key="5">
    <source ref="1"/>
</evidence>
<evidence type="ECO:0000305" key="6"/>
<accession>Q8NBB4</accession>
<accession>Q3B798</accession>
<accession>Q6WLH8</accession>
<accession>Q86WS8</accession>
<feature type="chain" id="PRO_0000047748" description="Zinc finger and SCAN domain-containing protein 1">
    <location>
        <begin position="1"/>
        <end position="408"/>
    </location>
</feature>
<feature type="domain" description="SCAN box" evidence="2">
    <location>
        <begin position="38"/>
        <end position="120"/>
    </location>
</feature>
<feature type="zinc finger region" description="C2H2-type 1" evidence="1">
    <location>
        <begin position="292"/>
        <end position="314"/>
    </location>
</feature>
<feature type="zinc finger region" description="C2H2-type 2" evidence="1">
    <location>
        <begin position="320"/>
        <end position="342"/>
    </location>
</feature>
<feature type="zinc finger region" description="C2H2-type 3" evidence="1">
    <location>
        <begin position="380"/>
        <end position="402"/>
    </location>
</feature>
<feature type="region of interest" description="Disordered" evidence="3">
    <location>
        <begin position="1"/>
        <end position="34"/>
    </location>
</feature>
<feature type="region of interest" description="Disordered" evidence="3">
    <location>
        <begin position="136"/>
        <end position="155"/>
    </location>
</feature>
<feature type="region of interest" description="Disordered" evidence="3">
    <location>
        <begin position="177"/>
        <end position="203"/>
    </location>
</feature>
<feature type="region of interest" description="Disordered" evidence="3">
    <location>
        <begin position="215"/>
        <end position="273"/>
    </location>
</feature>
<feature type="region of interest" description="Disordered" evidence="3">
    <location>
        <begin position="344"/>
        <end position="379"/>
    </location>
</feature>
<feature type="compositionally biased region" description="Polar residues" evidence="3">
    <location>
        <begin position="177"/>
        <end position="187"/>
    </location>
</feature>
<feature type="splice variant" id="VSP_011953" description="In isoform 2." evidence="4 5">
    <original>VLVSLDSVEPQDWSFGEEEDGKSPRSQKEPSQASELILDAVAAAPALPEESEWLE</original>
    <variation>GERRRLRAPGRARGPDVSEDRTALLPAHIAPTPARPLPTSKPLLPRGCVFNYFYI</variation>
    <location>
        <begin position="124"/>
        <end position="178"/>
    </location>
</feature>
<feature type="splice variant" id="VSP_011954" description="In isoform 2." evidence="4 5">
    <location>
        <begin position="179"/>
        <end position="408"/>
    </location>
</feature>
<feature type="sequence conflict" description="In Ref. 2; BAC03582." evidence="6" ref="2">
    <original>E</original>
    <variation>G</variation>
    <location>
        <position position="132"/>
    </location>
</feature>
<feature type="sequence conflict" description="In Ref. 1; AAQ16582." evidence="6" ref="1">
    <original>R</original>
    <variation>P</variation>
    <location sequence="Q8NBB4-2">
        <position position="130"/>
    </location>
</feature>
<reference key="1">
    <citation type="submission" date="2003-04" db="EMBL/GenBank/DDBJ databases">
        <title>Cloning and characterization of a novel scan box gene.</title>
        <authorList>
            <person name="Luo K.T."/>
            <person name="Yu L."/>
        </authorList>
    </citation>
    <scope>NUCLEOTIDE SEQUENCE [MRNA] (ISOFORM 2)</scope>
</reference>
<reference key="2">
    <citation type="journal article" date="2004" name="Nat. Genet.">
        <title>Complete sequencing and characterization of 21,243 full-length human cDNAs.</title>
        <authorList>
            <person name="Ota T."/>
            <person name="Suzuki Y."/>
            <person name="Nishikawa T."/>
            <person name="Otsuki T."/>
            <person name="Sugiyama T."/>
            <person name="Irie R."/>
            <person name="Wakamatsu A."/>
            <person name="Hayashi K."/>
            <person name="Sato H."/>
            <person name="Nagai K."/>
            <person name="Kimura K."/>
            <person name="Makita H."/>
            <person name="Sekine M."/>
            <person name="Obayashi M."/>
            <person name="Nishi T."/>
            <person name="Shibahara T."/>
            <person name="Tanaka T."/>
            <person name="Ishii S."/>
            <person name="Yamamoto J."/>
            <person name="Saito K."/>
            <person name="Kawai Y."/>
            <person name="Isono Y."/>
            <person name="Nakamura Y."/>
            <person name="Nagahari K."/>
            <person name="Murakami K."/>
            <person name="Yasuda T."/>
            <person name="Iwayanagi T."/>
            <person name="Wagatsuma M."/>
            <person name="Shiratori A."/>
            <person name="Sudo H."/>
            <person name="Hosoiri T."/>
            <person name="Kaku Y."/>
            <person name="Kodaira H."/>
            <person name="Kondo H."/>
            <person name="Sugawara M."/>
            <person name="Takahashi M."/>
            <person name="Kanda K."/>
            <person name="Yokoi T."/>
            <person name="Furuya T."/>
            <person name="Kikkawa E."/>
            <person name="Omura Y."/>
            <person name="Abe K."/>
            <person name="Kamihara K."/>
            <person name="Katsuta N."/>
            <person name="Sato K."/>
            <person name="Tanikawa M."/>
            <person name="Yamazaki M."/>
            <person name="Ninomiya K."/>
            <person name="Ishibashi T."/>
            <person name="Yamashita H."/>
            <person name="Murakawa K."/>
            <person name="Fujimori K."/>
            <person name="Tanai H."/>
            <person name="Kimata M."/>
            <person name="Watanabe M."/>
            <person name="Hiraoka S."/>
            <person name="Chiba Y."/>
            <person name="Ishida S."/>
            <person name="Ono Y."/>
            <person name="Takiguchi S."/>
            <person name="Watanabe S."/>
            <person name="Yosida M."/>
            <person name="Hotuta T."/>
            <person name="Kusano J."/>
            <person name="Kanehori K."/>
            <person name="Takahashi-Fujii A."/>
            <person name="Hara H."/>
            <person name="Tanase T.-O."/>
            <person name="Nomura Y."/>
            <person name="Togiya S."/>
            <person name="Komai F."/>
            <person name="Hara R."/>
            <person name="Takeuchi K."/>
            <person name="Arita M."/>
            <person name="Imose N."/>
            <person name="Musashino K."/>
            <person name="Yuuki H."/>
            <person name="Oshima A."/>
            <person name="Sasaki N."/>
            <person name="Aotsuka S."/>
            <person name="Yoshikawa Y."/>
            <person name="Matsunawa H."/>
            <person name="Ichihara T."/>
            <person name="Shiohata N."/>
            <person name="Sano S."/>
            <person name="Moriya S."/>
            <person name="Momiyama H."/>
            <person name="Satoh N."/>
            <person name="Takami S."/>
            <person name="Terashima Y."/>
            <person name="Suzuki O."/>
            <person name="Nakagawa S."/>
            <person name="Senoh A."/>
            <person name="Mizoguchi H."/>
            <person name="Goto Y."/>
            <person name="Shimizu F."/>
            <person name="Wakebe H."/>
            <person name="Hishigaki H."/>
            <person name="Watanabe T."/>
            <person name="Sugiyama A."/>
            <person name="Takemoto M."/>
            <person name="Kawakami B."/>
            <person name="Yamazaki M."/>
            <person name="Watanabe K."/>
            <person name="Kumagai A."/>
            <person name="Itakura S."/>
            <person name="Fukuzumi Y."/>
            <person name="Fujimori Y."/>
            <person name="Komiyama M."/>
            <person name="Tashiro H."/>
            <person name="Tanigami A."/>
            <person name="Fujiwara T."/>
            <person name="Ono T."/>
            <person name="Yamada K."/>
            <person name="Fujii Y."/>
            <person name="Ozaki K."/>
            <person name="Hirao M."/>
            <person name="Ohmori Y."/>
            <person name="Kawabata A."/>
            <person name="Hikiji T."/>
            <person name="Kobatake N."/>
            <person name="Inagaki H."/>
            <person name="Ikema Y."/>
            <person name="Okamoto S."/>
            <person name="Okitani R."/>
            <person name="Kawakami T."/>
            <person name="Noguchi S."/>
            <person name="Itoh T."/>
            <person name="Shigeta K."/>
            <person name="Senba T."/>
            <person name="Matsumura K."/>
            <person name="Nakajima Y."/>
            <person name="Mizuno T."/>
            <person name="Morinaga M."/>
            <person name="Sasaki M."/>
            <person name="Togashi T."/>
            <person name="Oyama M."/>
            <person name="Hata H."/>
            <person name="Watanabe M."/>
            <person name="Komatsu T."/>
            <person name="Mizushima-Sugano J."/>
            <person name="Satoh T."/>
            <person name="Shirai Y."/>
            <person name="Takahashi Y."/>
            <person name="Nakagawa K."/>
            <person name="Okumura K."/>
            <person name="Nagase T."/>
            <person name="Nomura N."/>
            <person name="Kikuchi H."/>
            <person name="Masuho Y."/>
            <person name="Yamashita R."/>
            <person name="Nakai K."/>
            <person name="Yada T."/>
            <person name="Nakamura Y."/>
            <person name="Ohara O."/>
            <person name="Isogai T."/>
            <person name="Sugano S."/>
        </authorList>
    </citation>
    <scope>NUCLEOTIDE SEQUENCE [LARGE SCALE MRNA] (ISOFORM 1)</scope>
    <source>
        <tissue>Substantia nigra</tissue>
    </source>
</reference>
<reference key="3">
    <citation type="journal article" date="2004" name="Nature">
        <title>The DNA sequence and biology of human chromosome 19.</title>
        <authorList>
            <person name="Grimwood J."/>
            <person name="Gordon L.A."/>
            <person name="Olsen A.S."/>
            <person name="Terry A."/>
            <person name="Schmutz J."/>
            <person name="Lamerdin J.E."/>
            <person name="Hellsten U."/>
            <person name="Goodstein D."/>
            <person name="Couronne O."/>
            <person name="Tran-Gyamfi M."/>
            <person name="Aerts A."/>
            <person name="Altherr M."/>
            <person name="Ashworth L."/>
            <person name="Bajorek E."/>
            <person name="Black S."/>
            <person name="Branscomb E."/>
            <person name="Caenepeel S."/>
            <person name="Carrano A.V."/>
            <person name="Caoile C."/>
            <person name="Chan Y.M."/>
            <person name="Christensen M."/>
            <person name="Cleland C.A."/>
            <person name="Copeland A."/>
            <person name="Dalin E."/>
            <person name="Dehal P."/>
            <person name="Denys M."/>
            <person name="Detter J.C."/>
            <person name="Escobar J."/>
            <person name="Flowers D."/>
            <person name="Fotopulos D."/>
            <person name="Garcia C."/>
            <person name="Georgescu A.M."/>
            <person name="Glavina T."/>
            <person name="Gomez M."/>
            <person name="Gonzales E."/>
            <person name="Groza M."/>
            <person name="Hammon N."/>
            <person name="Hawkins T."/>
            <person name="Haydu L."/>
            <person name="Ho I."/>
            <person name="Huang W."/>
            <person name="Israni S."/>
            <person name="Jett J."/>
            <person name="Kadner K."/>
            <person name="Kimball H."/>
            <person name="Kobayashi A."/>
            <person name="Larionov V."/>
            <person name="Leem S.-H."/>
            <person name="Lopez F."/>
            <person name="Lou Y."/>
            <person name="Lowry S."/>
            <person name="Malfatti S."/>
            <person name="Martinez D."/>
            <person name="McCready P.M."/>
            <person name="Medina C."/>
            <person name="Morgan J."/>
            <person name="Nelson K."/>
            <person name="Nolan M."/>
            <person name="Ovcharenko I."/>
            <person name="Pitluck S."/>
            <person name="Pollard M."/>
            <person name="Popkie A.P."/>
            <person name="Predki P."/>
            <person name="Quan G."/>
            <person name="Ramirez L."/>
            <person name="Rash S."/>
            <person name="Retterer J."/>
            <person name="Rodriguez A."/>
            <person name="Rogers S."/>
            <person name="Salamov A."/>
            <person name="Salazar A."/>
            <person name="She X."/>
            <person name="Smith D."/>
            <person name="Slezak T."/>
            <person name="Solovyev V."/>
            <person name="Thayer N."/>
            <person name="Tice H."/>
            <person name="Tsai M."/>
            <person name="Ustaszewska A."/>
            <person name="Vo N."/>
            <person name="Wagner M."/>
            <person name="Wheeler J."/>
            <person name="Wu K."/>
            <person name="Xie G."/>
            <person name="Yang J."/>
            <person name="Dubchak I."/>
            <person name="Furey T.S."/>
            <person name="DeJong P."/>
            <person name="Dickson M."/>
            <person name="Gordon D."/>
            <person name="Eichler E.E."/>
            <person name="Pennacchio L.A."/>
            <person name="Richardson P."/>
            <person name="Stubbs L."/>
            <person name="Rokhsar D.S."/>
            <person name="Myers R.M."/>
            <person name="Rubin E.M."/>
            <person name="Lucas S.M."/>
        </authorList>
    </citation>
    <scope>NUCLEOTIDE SEQUENCE [LARGE SCALE GENOMIC DNA]</scope>
</reference>
<reference key="4">
    <citation type="submission" date="2005-07" db="EMBL/GenBank/DDBJ databases">
        <authorList>
            <person name="Mural R.J."/>
            <person name="Istrail S."/>
            <person name="Sutton G.G."/>
            <person name="Florea L."/>
            <person name="Halpern A.L."/>
            <person name="Mobarry C.M."/>
            <person name="Lippert R."/>
            <person name="Walenz B."/>
            <person name="Shatkay H."/>
            <person name="Dew I."/>
            <person name="Miller J.R."/>
            <person name="Flanigan M.J."/>
            <person name="Edwards N.J."/>
            <person name="Bolanos R."/>
            <person name="Fasulo D."/>
            <person name="Halldorsson B.V."/>
            <person name="Hannenhalli S."/>
            <person name="Turner R."/>
            <person name="Yooseph S."/>
            <person name="Lu F."/>
            <person name="Nusskern D.R."/>
            <person name="Shue B.C."/>
            <person name="Zheng X.H."/>
            <person name="Zhong F."/>
            <person name="Delcher A.L."/>
            <person name="Huson D.H."/>
            <person name="Kravitz S.A."/>
            <person name="Mouchard L."/>
            <person name="Reinert K."/>
            <person name="Remington K.A."/>
            <person name="Clark A.G."/>
            <person name="Waterman M.S."/>
            <person name="Eichler E.E."/>
            <person name="Adams M.D."/>
            <person name="Hunkapiller M.W."/>
            <person name="Myers E.W."/>
            <person name="Venter J.C."/>
        </authorList>
    </citation>
    <scope>NUCLEOTIDE SEQUENCE [LARGE SCALE GENOMIC DNA]</scope>
</reference>
<reference key="5">
    <citation type="journal article" date="2004" name="Genome Res.">
        <title>The status, quality, and expansion of the NIH full-length cDNA project: the Mammalian Gene Collection (MGC).</title>
        <authorList>
            <consortium name="The MGC Project Team"/>
        </authorList>
    </citation>
    <scope>NUCLEOTIDE SEQUENCE [LARGE SCALE MRNA] (ISOFORM 2)</scope>
    <source>
        <tissue>Brain</tissue>
        <tissue>Lung</tissue>
    </source>
</reference>